<sequence>MNPMIFTSLLATIMLGTSIVLTSSHWFLTWLGFEMNMMAIIPVLMKKYNPRSMEAATKYFLTQATASMILVLAIIINLMYSGQWTIMIMENPTASMLITIALVMKLGLAPFHFWVPEVTQGVSLSSGLILLTWQKIAPLSLLYQIFPSINTNLLLIMSLLSIMIGGWGGLNQTQLRKIMAYSSIAHMGWMIAIMIYNPNLSLLNLLIYIMMTSSMFMLLIINSTTSTSSLSRAWNINPIVVSTMMVILLSLGGLPPLTGFMPKWMIIQELTKNSSVMLPSLMAILALLNLFFYMRLTYSTALTMFPTMNNMKLTWQFQSTNIMPMMMSLISMSMLALPLAPSLITLN</sequence>
<proteinExistence type="inferred from homology"/>
<comment type="function">
    <text evidence="1">Core subunit of the mitochondrial membrane respiratory chain NADH dehydrogenase (Complex I) which catalyzes electron transfer from NADH through the respiratory chain, using ubiquinone as an electron acceptor. Essential for the catalytic activity and assembly of complex I.</text>
</comment>
<comment type="catalytic activity">
    <reaction evidence="1">
        <text>a ubiquinone + NADH + 5 H(+)(in) = a ubiquinol + NAD(+) + 4 H(+)(out)</text>
        <dbReference type="Rhea" id="RHEA:29091"/>
        <dbReference type="Rhea" id="RHEA-COMP:9565"/>
        <dbReference type="Rhea" id="RHEA-COMP:9566"/>
        <dbReference type="ChEBI" id="CHEBI:15378"/>
        <dbReference type="ChEBI" id="CHEBI:16389"/>
        <dbReference type="ChEBI" id="CHEBI:17976"/>
        <dbReference type="ChEBI" id="CHEBI:57540"/>
        <dbReference type="ChEBI" id="CHEBI:57945"/>
        <dbReference type="EC" id="7.1.1.2"/>
    </reaction>
</comment>
<comment type="subunit">
    <text evidence="1 2">Core subunit of respiratory chain NADH dehydrogenase (Complex I) which is composed of 45 different subunits. Interacts with TMEM242 (By similarity).</text>
</comment>
<comment type="subcellular location">
    <subcellularLocation>
        <location evidence="2">Mitochondrion inner membrane</location>
        <topology evidence="3">Multi-pass membrane protein</topology>
    </subcellularLocation>
</comment>
<comment type="similarity">
    <text evidence="4">Belongs to the complex I subunit 2 family.</text>
</comment>
<reference key="1">
    <citation type="submission" date="2004-07" db="EMBL/GenBank/DDBJ databases">
        <title>Phylogeny, phylogeography, and geographic variation of Sylvisorex howelli, an endemic shrew of the Eastern Arc mountains.</title>
        <authorList>
            <person name="Stanley W.T."/>
            <person name="Olson L.E."/>
        </authorList>
    </citation>
    <scope>NUCLEOTIDE SEQUENCE [GENOMIC DNA]</scope>
</reference>
<dbReference type="EC" id="7.1.1.2" evidence="1"/>
<dbReference type="EMBL" id="AY691833">
    <property type="protein sequence ID" value="AAW29756.1"/>
    <property type="molecule type" value="Genomic_DNA"/>
</dbReference>
<dbReference type="SMR" id="Q2TQ19"/>
<dbReference type="GO" id="GO:0005743">
    <property type="term" value="C:mitochondrial inner membrane"/>
    <property type="evidence" value="ECO:0000250"/>
    <property type="project" value="UniProtKB"/>
</dbReference>
<dbReference type="GO" id="GO:0008137">
    <property type="term" value="F:NADH dehydrogenase (ubiquinone) activity"/>
    <property type="evidence" value="ECO:0000250"/>
    <property type="project" value="UniProtKB"/>
</dbReference>
<dbReference type="GO" id="GO:0006120">
    <property type="term" value="P:mitochondrial electron transport, NADH to ubiquinone"/>
    <property type="evidence" value="ECO:0000250"/>
    <property type="project" value="UniProtKB"/>
</dbReference>
<dbReference type="GO" id="GO:0032981">
    <property type="term" value="P:mitochondrial respiratory chain complex I assembly"/>
    <property type="evidence" value="ECO:0000250"/>
    <property type="project" value="UniProtKB"/>
</dbReference>
<dbReference type="InterPro" id="IPR050175">
    <property type="entry name" value="Complex_I_Subunit_2"/>
</dbReference>
<dbReference type="InterPro" id="IPR010933">
    <property type="entry name" value="NADH_DH_su2_C"/>
</dbReference>
<dbReference type="InterPro" id="IPR003917">
    <property type="entry name" value="NADH_UbQ_OxRdtase_chain2"/>
</dbReference>
<dbReference type="InterPro" id="IPR001750">
    <property type="entry name" value="ND/Mrp_TM"/>
</dbReference>
<dbReference type="PANTHER" id="PTHR46552">
    <property type="entry name" value="NADH-UBIQUINONE OXIDOREDUCTASE CHAIN 2"/>
    <property type="match status" value="1"/>
</dbReference>
<dbReference type="PANTHER" id="PTHR46552:SF1">
    <property type="entry name" value="NADH-UBIQUINONE OXIDOREDUCTASE CHAIN 2"/>
    <property type="match status" value="1"/>
</dbReference>
<dbReference type="Pfam" id="PF06444">
    <property type="entry name" value="NADH_dehy_S2_C"/>
    <property type="match status" value="1"/>
</dbReference>
<dbReference type="Pfam" id="PF00361">
    <property type="entry name" value="Proton_antipo_M"/>
    <property type="match status" value="1"/>
</dbReference>
<dbReference type="PRINTS" id="PR01436">
    <property type="entry name" value="NADHDHGNASE2"/>
</dbReference>
<name>NU2M_SYLLU</name>
<feature type="chain" id="PRO_0000226715" description="NADH-ubiquinone oxidoreductase chain 2">
    <location>
        <begin position="1"/>
        <end position="347"/>
    </location>
</feature>
<feature type="transmembrane region" description="Helical" evidence="3">
    <location>
        <begin position="1"/>
        <end position="21"/>
    </location>
</feature>
<feature type="transmembrane region" description="Helical" evidence="3">
    <location>
        <begin position="25"/>
        <end position="45"/>
    </location>
</feature>
<feature type="transmembrane region" description="Helical" evidence="3">
    <location>
        <begin position="68"/>
        <end position="88"/>
    </location>
</feature>
<feature type="transmembrane region" description="Helical" evidence="3">
    <location>
        <begin position="96"/>
        <end position="116"/>
    </location>
</feature>
<feature type="transmembrane region" description="Helical" evidence="3">
    <location>
        <begin position="122"/>
        <end position="142"/>
    </location>
</feature>
<feature type="transmembrane region" description="Helical" evidence="3">
    <location>
        <begin position="145"/>
        <end position="165"/>
    </location>
</feature>
<feature type="transmembrane region" description="Helical" evidence="3">
    <location>
        <begin position="178"/>
        <end position="198"/>
    </location>
</feature>
<feature type="transmembrane region" description="Helical" evidence="3">
    <location>
        <begin position="201"/>
        <end position="221"/>
    </location>
</feature>
<feature type="transmembrane region" description="Helical" evidence="3">
    <location>
        <begin position="239"/>
        <end position="259"/>
    </location>
</feature>
<feature type="transmembrane region" description="Helical" evidence="3">
    <location>
        <begin position="274"/>
        <end position="294"/>
    </location>
</feature>
<feature type="transmembrane region" description="Helical" evidence="3">
    <location>
        <begin position="326"/>
        <end position="346"/>
    </location>
</feature>
<accession>Q2TQ19</accession>
<evidence type="ECO:0000250" key="1">
    <source>
        <dbReference type="UniProtKB" id="P03891"/>
    </source>
</evidence>
<evidence type="ECO:0000250" key="2">
    <source>
        <dbReference type="UniProtKB" id="P03892"/>
    </source>
</evidence>
<evidence type="ECO:0000255" key="3"/>
<evidence type="ECO:0000305" key="4"/>
<keyword id="KW-0249">Electron transport</keyword>
<keyword id="KW-0472">Membrane</keyword>
<keyword id="KW-0496">Mitochondrion</keyword>
<keyword id="KW-0999">Mitochondrion inner membrane</keyword>
<keyword id="KW-0520">NAD</keyword>
<keyword id="KW-0679">Respiratory chain</keyword>
<keyword id="KW-1278">Translocase</keyword>
<keyword id="KW-0812">Transmembrane</keyword>
<keyword id="KW-1133">Transmembrane helix</keyword>
<keyword id="KW-0813">Transport</keyword>
<keyword id="KW-0830">Ubiquinone</keyword>
<organism>
    <name type="scientific">Sylvisorex lunaris</name>
    <name type="common">Moon forest shrew</name>
    <dbReference type="NCBI Taxonomy" id="307106"/>
    <lineage>
        <taxon>Eukaryota</taxon>
        <taxon>Metazoa</taxon>
        <taxon>Chordata</taxon>
        <taxon>Craniata</taxon>
        <taxon>Vertebrata</taxon>
        <taxon>Euteleostomi</taxon>
        <taxon>Mammalia</taxon>
        <taxon>Eutheria</taxon>
        <taxon>Laurasiatheria</taxon>
        <taxon>Eulipotyphla</taxon>
        <taxon>Soricidae</taxon>
        <taxon>Crocidurinae</taxon>
        <taxon>Sylvisorex</taxon>
    </lineage>
</organism>
<gene>
    <name evidence="1" type="primary">MT-ND2</name>
    <name type="synonym">MTND2</name>
    <name type="synonym">NADH2</name>
    <name type="synonym">ND2</name>
</gene>
<protein>
    <recommendedName>
        <fullName evidence="1">NADH-ubiquinone oxidoreductase chain 2</fullName>
        <ecNumber evidence="1">7.1.1.2</ecNumber>
    </recommendedName>
    <alternativeName>
        <fullName>NADH dehydrogenase subunit 2</fullName>
    </alternativeName>
</protein>
<geneLocation type="mitochondrion"/>